<feature type="chain" id="PRO_1000018421" description="Tryptophan synthase beta chain">
    <location>
        <begin position="1"/>
        <end position="405"/>
    </location>
</feature>
<feature type="modified residue" description="N6-(pyridoxal phosphate)lysine" evidence="1">
    <location>
        <position position="98"/>
    </location>
</feature>
<accession>Q3BRL3</accession>
<evidence type="ECO:0000255" key="1">
    <source>
        <dbReference type="HAMAP-Rule" id="MF_00133"/>
    </source>
</evidence>
<comment type="function">
    <text evidence="1">The beta subunit is responsible for the synthesis of L-tryptophan from indole and L-serine.</text>
</comment>
<comment type="catalytic activity">
    <reaction evidence="1">
        <text>(1S,2R)-1-C-(indol-3-yl)glycerol 3-phosphate + L-serine = D-glyceraldehyde 3-phosphate + L-tryptophan + H2O</text>
        <dbReference type="Rhea" id="RHEA:10532"/>
        <dbReference type="ChEBI" id="CHEBI:15377"/>
        <dbReference type="ChEBI" id="CHEBI:33384"/>
        <dbReference type="ChEBI" id="CHEBI:57912"/>
        <dbReference type="ChEBI" id="CHEBI:58866"/>
        <dbReference type="ChEBI" id="CHEBI:59776"/>
        <dbReference type="EC" id="4.2.1.20"/>
    </reaction>
</comment>
<comment type="cofactor">
    <cofactor evidence="1">
        <name>pyridoxal 5'-phosphate</name>
        <dbReference type="ChEBI" id="CHEBI:597326"/>
    </cofactor>
</comment>
<comment type="pathway">
    <text evidence="1">Amino-acid biosynthesis; L-tryptophan biosynthesis; L-tryptophan from chorismate: step 5/5.</text>
</comment>
<comment type="subunit">
    <text evidence="1">Tetramer of two alpha and two beta chains.</text>
</comment>
<comment type="similarity">
    <text evidence="1">Belongs to the TrpB family.</text>
</comment>
<protein>
    <recommendedName>
        <fullName evidence="1">Tryptophan synthase beta chain</fullName>
        <ecNumber evidence="1">4.2.1.20</ecNumber>
    </recommendedName>
</protein>
<gene>
    <name evidence="1" type="primary">trpB</name>
    <name type="ordered locus">XCV2869</name>
</gene>
<organism>
    <name type="scientific">Xanthomonas euvesicatoria pv. vesicatoria (strain 85-10)</name>
    <name type="common">Xanthomonas campestris pv. vesicatoria</name>
    <dbReference type="NCBI Taxonomy" id="316273"/>
    <lineage>
        <taxon>Bacteria</taxon>
        <taxon>Pseudomonadati</taxon>
        <taxon>Pseudomonadota</taxon>
        <taxon>Gammaproteobacteria</taxon>
        <taxon>Lysobacterales</taxon>
        <taxon>Lysobacteraceae</taxon>
        <taxon>Xanthomonas</taxon>
    </lineage>
</organism>
<name>TRPB_XANE5</name>
<keyword id="KW-0028">Amino-acid biosynthesis</keyword>
<keyword id="KW-0057">Aromatic amino acid biosynthesis</keyword>
<keyword id="KW-0456">Lyase</keyword>
<keyword id="KW-0663">Pyridoxal phosphate</keyword>
<keyword id="KW-0822">Tryptophan biosynthesis</keyword>
<dbReference type="EC" id="4.2.1.20" evidence="1"/>
<dbReference type="EMBL" id="AM039952">
    <property type="protein sequence ID" value="CAJ24548.1"/>
    <property type="molecule type" value="Genomic_DNA"/>
</dbReference>
<dbReference type="RefSeq" id="WP_005914297.1">
    <property type="nucleotide sequence ID" value="NZ_CP017190.1"/>
</dbReference>
<dbReference type="SMR" id="Q3BRL3"/>
<dbReference type="STRING" id="456327.BJD11_08510"/>
<dbReference type="GeneID" id="93991919"/>
<dbReference type="KEGG" id="xcv:XCV2869"/>
<dbReference type="eggNOG" id="COG0133">
    <property type="taxonomic scope" value="Bacteria"/>
</dbReference>
<dbReference type="HOGENOM" id="CLU_016734_3_1_6"/>
<dbReference type="UniPathway" id="UPA00035">
    <property type="reaction ID" value="UER00044"/>
</dbReference>
<dbReference type="Proteomes" id="UP000007069">
    <property type="component" value="Chromosome"/>
</dbReference>
<dbReference type="GO" id="GO:0005737">
    <property type="term" value="C:cytoplasm"/>
    <property type="evidence" value="ECO:0007669"/>
    <property type="project" value="TreeGrafter"/>
</dbReference>
<dbReference type="GO" id="GO:0004834">
    <property type="term" value="F:tryptophan synthase activity"/>
    <property type="evidence" value="ECO:0007669"/>
    <property type="project" value="UniProtKB-UniRule"/>
</dbReference>
<dbReference type="CDD" id="cd06446">
    <property type="entry name" value="Trp-synth_B"/>
    <property type="match status" value="1"/>
</dbReference>
<dbReference type="FunFam" id="3.40.50.1100:FF:000001">
    <property type="entry name" value="Tryptophan synthase beta chain"/>
    <property type="match status" value="1"/>
</dbReference>
<dbReference type="FunFam" id="3.40.50.1100:FF:000004">
    <property type="entry name" value="Tryptophan synthase beta chain"/>
    <property type="match status" value="1"/>
</dbReference>
<dbReference type="Gene3D" id="3.40.50.1100">
    <property type="match status" value="2"/>
</dbReference>
<dbReference type="HAMAP" id="MF_00133">
    <property type="entry name" value="Trp_synth_beta"/>
    <property type="match status" value="1"/>
</dbReference>
<dbReference type="InterPro" id="IPR006653">
    <property type="entry name" value="Trp_synth_b_CS"/>
</dbReference>
<dbReference type="InterPro" id="IPR006654">
    <property type="entry name" value="Trp_synth_beta"/>
</dbReference>
<dbReference type="InterPro" id="IPR023026">
    <property type="entry name" value="Trp_synth_beta/beta-like"/>
</dbReference>
<dbReference type="InterPro" id="IPR001926">
    <property type="entry name" value="TrpB-like_PALP"/>
</dbReference>
<dbReference type="InterPro" id="IPR036052">
    <property type="entry name" value="TrpB-like_PALP_sf"/>
</dbReference>
<dbReference type="NCBIfam" id="TIGR00263">
    <property type="entry name" value="trpB"/>
    <property type="match status" value="1"/>
</dbReference>
<dbReference type="PANTHER" id="PTHR48077:SF3">
    <property type="entry name" value="TRYPTOPHAN SYNTHASE"/>
    <property type="match status" value="1"/>
</dbReference>
<dbReference type="PANTHER" id="PTHR48077">
    <property type="entry name" value="TRYPTOPHAN SYNTHASE-RELATED"/>
    <property type="match status" value="1"/>
</dbReference>
<dbReference type="Pfam" id="PF00291">
    <property type="entry name" value="PALP"/>
    <property type="match status" value="1"/>
</dbReference>
<dbReference type="PIRSF" id="PIRSF001413">
    <property type="entry name" value="Trp_syn_beta"/>
    <property type="match status" value="1"/>
</dbReference>
<dbReference type="SUPFAM" id="SSF53686">
    <property type="entry name" value="Tryptophan synthase beta subunit-like PLP-dependent enzymes"/>
    <property type="match status" value="1"/>
</dbReference>
<dbReference type="PROSITE" id="PS00168">
    <property type="entry name" value="TRP_SYNTHASE_BETA"/>
    <property type="match status" value="1"/>
</dbReference>
<reference key="1">
    <citation type="journal article" date="2005" name="J. Bacteriol.">
        <title>Insights into genome plasticity and pathogenicity of the plant pathogenic Bacterium Xanthomonas campestris pv. vesicatoria revealed by the complete genome sequence.</title>
        <authorList>
            <person name="Thieme F."/>
            <person name="Koebnik R."/>
            <person name="Bekel T."/>
            <person name="Berger C."/>
            <person name="Boch J."/>
            <person name="Buettner D."/>
            <person name="Caldana C."/>
            <person name="Gaigalat L."/>
            <person name="Goesmann A."/>
            <person name="Kay S."/>
            <person name="Kirchner O."/>
            <person name="Lanz C."/>
            <person name="Linke B."/>
            <person name="McHardy A.C."/>
            <person name="Meyer F."/>
            <person name="Mittenhuber G."/>
            <person name="Nies D.H."/>
            <person name="Niesbach-Kloesgen U."/>
            <person name="Patschkowski T."/>
            <person name="Rueckert C."/>
            <person name="Rupp O."/>
            <person name="Schneiker S."/>
            <person name="Schuster S.C."/>
            <person name="Vorhoelter F.J."/>
            <person name="Weber E."/>
            <person name="Puehler A."/>
            <person name="Bonas U."/>
            <person name="Bartels D."/>
            <person name="Kaiser O."/>
        </authorList>
    </citation>
    <scope>NUCLEOTIDE SEQUENCE [LARGE SCALE GENOMIC DNA]</scope>
    <source>
        <strain>85-10</strain>
    </source>
</reference>
<sequence length="405" mass="43193">MSAQPISDFYAYPDAAGHFGKFGGRFVAETLIGPLQELSAAYDQARQDPSFIAEYDKDLKHYVGRPSPIYHAERLSREVGGAQILLKREDLNHTGAHKINNTIGQALLASRMGKTRIIAETGAGQHGVASATVAARLGLECVVYMGATDIERQKINVYRMKLLGATVIPVTSGSATLKDALNEAMRDWVTNVRDTFYIIGTVAGPDPYPRMVRDFNAIVGREAREQMLQDYGRLPDAISACVGGGSNAIGLFHAFLNDPGVKIYGAEAAGDGIATGRHAASIAAGRPGVLHGNRTYVICDDDGQITETHSISAGLDYPGVGPEHSFLSDSGRAVYQGITDDEAMAAFHLLAHTEGILAALESSHAVAQSIKLARELPRDALVLCNLSGRGDKDVHTIAAREGIAL</sequence>
<proteinExistence type="inferred from homology"/>